<reference key="1">
    <citation type="journal article" date="2005" name="Nucleic Acids Res.">
        <title>The genome sequence of Salmonella enterica serovar Choleraesuis, a highly invasive and resistant zoonotic pathogen.</title>
        <authorList>
            <person name="Chiu C.-H."/>
            <person name="Tang P."/>
            <person name="Chu C."/>
            <person name="Hu S."/>
            <person name="Bao Q."/>
            <person name="Yu J."/>
            <person name="Chou Y.-Y."/>
            <person name="Wang H.-S."/>
            <person name="Lee Y.-S."/>
        </authorList>
    </citation>
    <scope>NUCLEOTIDE SEQUENCE [LARGE SCALE GENOMIC DNA]</scope>
    <source>
        <strain>SC-B67</strain>
    </source>
</reference>
<protein>
    <recommendedName>
        <fullName evidence="1">UPF0208 membrane protein YfbV</fullName>
    </recommendedName>
</protein>
<proteinExistence type="inferred from homology"/>
<comment type="subcellular location">
    <subcellularLocation>
        <location evidence="1">Cell inner membrane</location>
        <topology evidence="1">Multi-pass membrane protein</topology>
    </subcellularLocation>
</comment>
<comment type="similarity">
    <text evidence="1">Belongs to the UPF0208 family.</text>
</comment>
<gene>
    <name evidence="1" type="primary">yfbV</name>
    <name type="ordered locus">SCH_2337</name>
</gene>
<organism>
    <name type="scientific">Salmonella choleraesuis (strain SC-B67)</name>
    <dbReference type="NCBI Taxonomy" id="321314"/>
    <lineage>
        <taxon>Bacteria</taxon>
        <taxon>Pseudomonadati</taxon>
        <taxon>Pseudomonadota</taxon>
        <taxon>Gammaproteobacteria</taxon>
        <taxon>Enterobacterales</taxon>
        <taxon>Enterobacteriaceae</taxon>
        <taxon>Salmonella</taxon>
    </lineage>
</organism>
<sequence length="151" mass="17201">MSTPDNRSVNFFSLFRRGQHYAKTWPMEKRLAPVFVENRVIRMTRYAIRFMPPVAVFTLCWQIALGGQLGPAVATALFALSLPMQGLWWLGKRSVTPLPPSILNWFYEVRGKLQEAGQALAPVEGKPDYQALADTLKRAFKQLDKTFLDDL</sequence>
<feature type="chain" id="PRO_1000064977" description="UPF0208 membrane protein YfbV">
    <location>
        <begin position="1"/>
        <end position="151"/>
    </location>
</feature>
<feature type="transmembrane region" description="Helical" evidence="1">
    <location>
        <begin position="46"/>
        <end position="65"/>
    </location>
</feature>
<feature type="transmembrane region" description="Helical" evidence="1">
    <location>
        <begin position="69"/>
        <end position="91"/>
    </location>
</feature>
<name>YFBV_SALCH</name>
<accession>Q57M19</accession>
<evidence type="ECO:0000255" key="1">
    <source>
        <dbReference type="HAMAP-Rule" id="MF_01101"/>
    </source>
</evidence>
<keyword id="KW-0997">Cell inner membrane</keyword>
<keyword id="KW-1003">Cell membrane</keyword>
<keyword id="KW-0472">Membrane</keyword>
<keyword id="KW-0812">Transmembrane</keyword>
<keyword id="KW-1133">Transmembrane helix</keyword>
<dbReference type="EMBL" id="AE017220">
    <property type="protein sequence ID" value="AAX66243.1"/>
    <property type="molecule type" value="Genomic_DNA"/>
</dbReference>
<dbReference type="RefSeq" id="WP_000106617.1">
    <property type="nucleotide sequence ID" value="NC_006905.1"/>
</dbReference>
<dbReference type="KEGG" id="sec:SCH_2337"/>
<dbReference type="HOGENOM" id="CLU_128746_0_0_6"/>
<dbReference type="Proteomes" id="UP000000538">
    <property type="component" value="Chromosome"/>
</dbReference>
<dbReference type="GO" id="GO:0005886">
    <property type="term" value="C:plasma membrane"/>
    <property type="evidence" value="ECO:0007669"/>
    <property type="project" value="UniProtKB-SubCell"/>
</dbReference>
<dbReference type="HAMAP" id="MF_01101">
    <property type="entry name" value="UPF0208"/>
    <property type="match status" value="1"/>
</dbReference>
<dbReference type="InterPro" id="IPR007334">
    <property type="entry name" value="UPF0208"/>
</dbReference>
<dbReference type="NCBIfam" id="NF002493">
    <property type="entry name" value="PRK01816.1"/>
    <property type="match status" value="1"/>
</dbReference>
<dbReference type="Pfam" id="PF04217">
    <property type="entry name" value="DUF412"/>
    <property type="match status" value="1"/>
</dbReference>